<keyword id="KW-0010">Activator</keyword>
<keyword id="KW-0238">DNA-binding</keyword>
<keyword id="KW-0597">Phosphoprotein</keyword>
<keyword id="KW-0804">Transcription</keyword>
<keyword id="KW-0805">Transcription regulation</keyword>
<keyword id="KW-0902">Two-component regulatory system</keyword>
<proteinExistence type="inferred from homology"/>
<reference key="1">
    <citation type="journal article" date="1996" name="Can. J. Microbiol.">
        <title>The repB gene required for production of extracellular enzymes and fluorescent siderophores in Pseudomonas viridiflava is an analog of the gacA gene of Pseudomonas syringae.</title>
        <authorList>
            <person name="Liao C.H."/>
            <person name="McCallus D.E."/>
            <person name="Wells J.M."/>
            <person name="Tzean S.S."/>
            <person name="Kang G.Y."/>
        </authorList>
    </citation>
    <scope>NUCLEOTIDE SEQUENCE [GENOMIC DNA]</scope>
    <source>
        <strain>PJ-08-6A</strain>
    </source>
</reference>
<comment type="function">
    <text>Required for production of extracellular enzymes and fluorescent siderophores.</text>
</comment>
<organism>
    <name type="scientific">Pseudomonas viridiflava</name>
    <name type="common">Phytomonas viridiflava</name>
    <dbReference type="NCBI Taxonomy" id="33069"/>
    <lineage>
        <taxon>Bacteria</taxon>
        <taxon>Pseudomonadati</taxon>
        <taxon>Pseudomonadota</taxon>
        <taxon>Gammaproteobacteria</taxon>
        <taxon>Pseudomonadales</taxon>
        <taxon>Pseudomonadaceae</taxon>
        <taxon>Pseudomonas</taxon>
    </lineage>
</organism>
<evidence type="ECO:0000255" key="1">
    <source>
        <dbReference type="PROSITE-ProRule" id="PRU00169"/>
    </source>
</evidence>
<evidence type="ECO:0000255" key="2">
    <source>
        <dbReference type="PROSITE-ProRule" id="PRU00411"/>
    </source>
</evidence>
<sequence length="214" mass="23444">MIRVLVVDDHDLVRTGITRMLADIDGLQVVGQADSGEESLKKARELKPDVVLMDVKMPGIGGLEATRKLLRSHPDIKVVAVTVCEEDPFPTRLLQAGAAGYMTKGAGLAEMVQAIRLVFAGQRYISPQIAQQLALKSFQPQVNNSPFDLLSEREIQIALMIVGCQKVQTISDKLCLSPKTVNTYRYRIFEKLSISSDVELALLAVRHGMVDASA</sequence>
<protein>
    <recommendedName>
        <fullName>Response regulator GacA</fullName>
    </recommendedName>
    <alternativeName>
        <fullName>Global activator</fullName>
    </alternativeName>
</protein>
<dbReference type="EMBL" id="L30102">
    <property type="protein sequence ID" value="AAB38979.1"/>
    <property type="molecule type" value="Genomic_DNA"/>
</dbReference>
<dbReference type="SMR" id="P95582"/>
<dbReference type="STRING" id="33069.AO065_16850"/>
<dbReference type="GO" id="GO:0003677">
    <property type="term" value="F:DNA binding"/>
    <property type="evidence" value="ECO:0007669"/>
    <property type="project" value="UniProtKB-KW"/>
</dbReference>
<dbReference type="GO" id="GO:0000160">
    <property type="term" value="P:phosphorelay signal transduction system"/>
    <property type="evidence" value="ECO:0007669"/>
    <property type="project" value="UniProtKB-KW"/>
</dbReference>
<dbReference type="GO" id="GO:0006355">
    <property type="term" value="P:regulation of DNA-templated transcription"/>
    <property type="evidence" value="ECO:0007669"/>
    <property type="project" value="InterPro"/>
</dbReference>
<dbReference type="CDD" id="cd06170">
    <property type="entry name" value="LuxR_C_like"/>
    <property type="match status" value="1"/>
</dbReference>
<dbReference type="CDD" id="cd17535">
    <property type="entry name" value="REC_NarL-like"/>
    <property type="match status" value="1"/>
</dbReference>
<dbReference type="FunFam" id="3.40.50.2300:FF:000015">
    <property type="entry name" value="Two-component response regulator UvrY"/>
    <property type="match status" value="1"/>
</dbReference>
<dbReference type="Gene3D" id="3.40.50.2300">
    <property type="match status" value="1"/>
</dbReference>
<dbReference type="InterPro" id="IPR011006">
    <property type="entry name" value="CheY-like_superfamily"/>
</dbReference>
<dbReference type="InterPro" id="IPR016032">
    <property type="entry name" value="Sig_transdc_resp-reg_C-effctor"/>
</dbReference>
<dbReference type="InterPro" id="IPR001789">
    <property type="entry name" value="Sig_transdc_resp-reg_receiver"/>
</dbReference>
<dbReference type="InterPro" id="IPR000792">
    <property type="entry name" value="Tscrpt_reg_LuxR_C"/>
</dbReference>
<dbReference type="InterPro" id="IPR039420">
    <property type="entry name" value="WalR-like"/>
</dbReference>
<dbReference type="NCBIfam" id="NF007018">
    <property type="entry name" value="PRK09483.1"/>
    <property type="match status" value="1"/>
</dbReference>
<dbReference type="PANTHER" id="PTHR43214:SF3">
    <property type="entry name" value="RESPONSE REGULATOR UVRY"/>
    <property type="match status" value="1"/>
</dbReference>
<dbReference type="PANTHER" id="PTHR43214">
    <property type="entry name" value="TWO-COMPONENT RESPONSE REGULATOR"/>
    <property type="match status" value="1"/>
</dbReference>
<dbReference type="Pfam" id="PF00196">
    <property type="entry name" value="GerE"/>
    <property type="match status" value="1"/>
</dbReference>
<dbReference type="Pfam" id="PF00072">
    <property type="entry name" value="Response_reg"/>
    <property type="match status" value="1"/>
</dbReference>
<dbReference type="SMART" id="SM00421">
    <property type="entry name" value="HTH_LUXR"/>
    <property type="match status" value="1"/>
</dbReference>
<dbReference type="SMART" id="SM00448">
    <property type="entry name" value="REC"/>
    <property type="match status" value="1"/>
</dbReference>
<dbReference type="SUPFAM" id="SSF46894">
    <property type="entry name" value="C-terminal effector domain of the bipartite response regulators"/>
    <property type="match status" value="1"/>
</dbReference>
<dbReference type="SUPFAM" id="SSF52172">
    <property type="entry name" value="CheY-like"/>
    <property type="match status" value="1"/>
</dbReference>
<dbReference type="PROSITE" id="PS00622">
    <property type="entry name" value="HTH_LUXR_1"/>
    <property type="match status" value="1"/>
</dbReference>
<dbReference type="PROSITE" id="PS50043">
    <property type="entry name" value="HTH_LUXR_2"/>
    <property type="match status" value="1"/>
</dbReference>
<dbReference type="PROSITE" id="PS50110">
    <property type="entry name" value="RESPONSE_REGULATORY"/>
    <property type="match status" value="1"/>
</dbReference>
<accession>P95582</accession>
<gene>
    <name type="primary">gacA</name>
    <name type="synonym">repB</name>
</gene>
<feature type="chain" id="PRO_0000081290" description="Response regulator GacA">
    <location>
        <begin position="1"/>
        <end position="214"/>
    </location>
</feature>
<feature type="domain" description="Response regulatory" evidence="1">
    <location>
        <begin position="3"/>
        <end position="119"/>
    </location>
</feature>
<feature type="domain" description="HTH luxR-type" evidence="2">
    <location>
        <begin position="143"/>
        <end position="208"/>
    </location>
</feature>
<feature type="DNA-binding region" description="H-T-H motif" evidence="2">
    <location>
        <begin position="167"/>
        <end position="186"/>
    </location>
</feature>
<feature type="modified residue" description="4-aspartylphosphate" evidence="1">
    <location>
        <position position="54"/>
    </location>
</feature>
<name>GACA_PSEVI</name>